<dbReference type="EC" id="1.18.6.1"/>
<dbReference type="EMBL" id="X13830">
    <property type="protein sequence ID" value="CAA32058.1"/>
    <property type="molecule type" value="Genomic_DNA"/>
</dbReference>
<dbReference type="PIR" id="S06987">
    <property type="entry name" value="S06987"/>
</dbReference>
<dbReference type="SMR" id="P20620"/>
<dbReference type="GO" id="GO:0005524">
    <property type="term" value="F:ATP binding"/>
    <property type="evidence" value="ECO:0007669"/>
    <property type="project" value="UniProtKB-KW"/>
</dbReference>
<dbReference type="GO" id="GO:0051536">
    <property type="term" value="F:iron-sulfur cluster binding"/>
    <property type="evidence" value="ECO:0007669"/>
    <property type="project" value="UniProtKB-KW"/>
</dbReference>
<dbReference type="GO" id="GO:0046872">
    <property type="term" value="F:metal ion binding"/>
    <property type="evidence" value="ECO:0007669"/>
    <property type="project" value="UniProtKB-KW"/>
</dbReference>
<dbReference type="GO" id="GO:0016163">
    <property type="term" value="F:nitrogenase activity"/>
    <property type="evidence" value="ECO:0007669"/>
    <property type="project" value="UniProtKB-EC"/>
</dbReference>
<dbReference type="GO" id="GO:0009399">
    <property type="term" value="P:nitrogen fixation"/>
    <property type="evidence" value="ECO:0007669"/>
    <property type="project" value="UniProtKB-KW"/>
</dbReference>
<dbReference type="CDD" id="cd01967">
    <property type="entry name" value="Nitrogenase_MoFe_alpha_like"/>
    <property type="match status" value="1"/>
</dbReference>
<dbReference type="Gene3D" id="3.40.50.12380">
    <property type="entry name" value="Nitrogenase MoFe cofactor biosynthesis protein NifE, C-terminal"/>
    <property type="match status" value="1"/>
</dbReference>
<dbReference type="Gene3D" id="3.40.50.1980">
    <property type="entry name" value="Nitrogenase molybdenum iron protein domain"/>
    <property type="match status" value="1"/>
</dbReference>
<dbReference type="InterPro" id="IPR000510">
    <property type="entry name" value="Nase/OxRdtase_comp1"/>
</dbReference>
<dbReference type="InterPro" id="IPR010143">
    <property type="entry name" value="Nase_comp1_asu"/>
</dbReference>
<dbReference type="InterPro" id="IPR000318">
    <property type="entry name" value="Nase_comp1_CS"/>
</dbReference>
<dbReference type="NCBIfam" id="TIGR01862">
    <property type="entry name" value="N2-ase-Ialpha"/>
    <property type="match status" value="1"/>
</dbReference>
<dbReference type="PANTHER" id="PTHR43457">
    <property type="entry name" value="NITROGENASE MOLYBDENUM-IRON PROTEIN ALPHA CHAIN"/>
    <property type="match status" value="1"/>
</dbReference>
<dbReference type="PANTHER" id="PTHR43457:SF1">
    <property type="entry name" value="NITROGENASE MOLYBDENUM-IRON PROTEIN ALPHA CHAIN"/>
    <property type="match status" value="1"/>
</dbReference>
<dbReference type="Pfam" id="PF00148">
    <property type="entry name" value="Oxidored_nitro"/>
    <property type="match status" value="1"/>
</dbReference>
<dbReference type="SUPFAM" id="SSF53807">
    <property type="entry name" value="Helical backbone' metal receptor"/>
    <property type="match status" value="1"/>
</dbReference>
<dbReference type="PROSITE" id="PS00699">
    <property type="entry name" value="NITROGENASE_1_1"/>
    <property type="match status" value="1"/>
</dbReference>
<dbReference type="PROSITE" id="PS00090">
    <property type="entry name" value="NITROGENASE_1_2"/>
    <property type="match status" value="1"/>
</dbReference>
<protein>
    <recommendedName>
        <fullName>Nitrogenase molybdenum-iron protein alpha chain</fullName>
        <ecNumber>1.18.6.1</ecNumber>
    </recommendedName>
    <alternativeName>
        <fullName>Dinitrogenase</fullName>
    </alternativeName>
    <alternativeName>
        <fullName>Nitrogenase component I</fullName>
    </alternativeName>
</protein>
<evidence type="ECO:0000250" key="1"/>
<evidence type="ECO:0000305" key="2"/>
<sequence>MPYILLDCDKFIPERMKHTYVYDPEENILPACNTNTVPGDMTERGCAFAGSRGVVGGPIKDAIHMVHGPIGCAYYTWGTRRALSDNEFHRRYCFCTDMQESDIVYGGEKTLEKASLEVMEEFPEASGTFIYTTCPTALIGDNVDAIARNIEKATKKPAIAINSPGFCGVSQSKGHHVFNMTFYKWLKLKRKEFPEKCMPEEEKTPYDVALIGDYNMDWDVAVIKPLLEKIGCRYVTTFTGNASLDELFQLMDVKLNIVHCQRSAEYIAQMINDGFDIPYTRATFFGLSDIAESLYDVAKALDLPKERVDQVIKEEMEAIQPKLDYYKSKLEGKTCMVYVGGPRTWHWIKAMKDLGVEYVAACCTFSHTDDYEKMNKNFKEAGIKDILVIDAPNEPELEEAVKTLDPDFMLVGLKERYLFRKYGVPTINSHSYEEGPYAGYRGFVNFARDVYKAVCHPVWNVLKEGEDKFKNFKGDLNE</sequence>
<organism>
    <name type="scientific">Methanothermococcus thermolithotrophicus</name>
    <name type="common">Methanococcus thermolithotrophicus</name>
    <dbReference type="NCBI Taxonomy" id="2186"/>
    <lineage>
        <taxon>Archaea</taxon>
        <taxon>Methanobacteriati</taxon>
        <taxon>Methanobacteriota</taxon>
        <taxon>Methanomada group</taxon>
        <taxon>Methanococci</taxon>
        <taxon>Methanococcales</taxon>
        <taxon>Methanococcaceae</taxon>
        <taxon>Methanothermococcus</taxon>
    </lineage>
</organism>
<keyword id="KW-0067">ATP-binding</keyword>
<keyword id="KW-0408">Iron</keyword>
<keyword id="KW-0411">Iron-sulfur</keyword>
<keyword id="KW-0479">Metal-binding</keyword>
<keyword id="KW-0500">Molybdenum</keyword>
<keyword id="KW-0535">Nitrogen fixation</keyword>
<keyword id="KW-0547">Nucleotide-binding</keyword>
<keyword id="KW-0560">Oxidoreductase</keyword>
<name>NIFD_METTL</name>
<comment type="function">
    <text>This molybdenum-iron protein is part of the nitrogenase complex that catalyzes the key enzymatic reactions in nitrogen fixation.</text>
</comment>
<comment type="catalytic activity">
    <reaction>
        <text>N2 + 8 reduced [2Fe-2S]-[ferredoxin] + 16 ATP + 16 H2O = H2 + 8 oxidized [2Fe-2S]-[ferredoxin] + 2 NH4(+) + 16 ADP + 16 phosphate + 6 H(+)</text>
        <dbReference type="Rhea" id="RHEA:21448"/>
        <dbReference type="Rhea" id="RHEA-COMP:10000"/>
        <dbReference type="Rhea" id="RHEA-COMP:10001"/>
        <dbReference type="ChEBI" id="CHEBI:15377"/>
        <dbReference type="ChEBI" id="CHEBI:15378"/>
        <dbReference type="ChEBI" id="CHEBI:17997"/>
        <dbReference type="ChEBI" id="CHEBI:18276"/>
        <dbReference type="ChEBI" id="CHEBI:28938"/>
        <dbReference type="ChEBI" id="CHEBI:30616"/>
        <dbReference type="ChEBI" id="CHEBI:33737"/>
        <dbReference type="ChEBI" id="CHEBI:33738"/>
        <dbReference type="ChEBI" id="CHEBI:43474"/>
        <dbReference type="ChEBI" id="CHEBI:456216"/>
        <dbReference type="EC" id="1.18.6.1"/>
    </reaction>
</comment>
<comment type="cofactor">
    <cofactor evidence="1">
        <name>[8Fe-7S] cluster</name>
        <dbReference type="ChEBI" id="CHEBI:21143"/>
    </cofactor>
    <text evidence="1">Binds 1 [8Fe-7S] cluster per heterodimer.</text>
</comment>
<comment type="cofactor">
    <cofactor evidence="1">
        <name>[7Fe-Mo-9S-C-homocitryl] cluster</name>
        <dbReference type="ChEBI" id="CHEBI:30409"/>
    </cofactor>
    <text evidence="1">Binds 1 [7Fe-Mo-9S-C-homocitryl] cluster per subunit.</text>
</comment>
<comment type="subunit">
    <text>Tetramer of two alpha and two beta chains. Forms complex with the iron protein (nitrogenase component 2).</text>
</comment>
<comment type="similarity">
    <text evidence="2">Belongs to the NifD/NifK/NifE/NifN family.</text>
</comment>
<accession>P20620</accession>
<gene>
    <name type="primary">nifD</name>
</gene>
<feature type="chain" id="PRO_0000153075" description="Nitrogenase molybdenum-iron protein alpha chain">
    <location>
        <begin position="1"/>
        <end position="478"/>
    </location>
</feature>
<feature type="binding site" evidence="1">
    <location>
        <position position="46"/>
    </location>
    <ligand>
        <name>[8Fe-7S] cluster</name>
        <dbReference type="ChEBI" id="CHEBI:21143"/>
        <note>ligand shared with beta chain</note>
    </ligand>
</feature>
<feature type="binding site" evidence="1">
    <location>
        <position position="72"/>
    </location>
    <ligand>
        <name>[8Fe-7S] cluster</name>
        <dbReference type="ChEBI" id="CHEBI:21143"/>
        <note>ligand shared with beta chain</note>
    </ligand>
</feature>
<feature type="binding site" evidence="1">
    <location>
        <position position="134"/>
    </location>
    <ligand>
        <name>[8Fe-7S] cluster</name>
        <dbReference type="ChEBI" id="CHEBI:21143"/>
        <note>ligand shared with beta chain</note>
    </ligand>
</feature>
<feature type="binding site" evidence="1">
    <location>
        <position position="260"/>
    </location>
    <ligand>
        <name>[7Fe-Mo-9S-C-homocitryl] cluster</name>
        <dbReference type="ChEBI" id="CHEBI:30409"/>
    </ligand>
</feature>
<feature type="binding site" evidence="1">
    <location>
        <position position="430"/>
    </location>
    <ligand>
        <name>[7Fe-Mo-9S-C-homocitryl] cluster</name>
        <dbReference type="ChEBI" id="CHEBI:30409"/>
    </ligand>
</feature>
<proteinExistence type="inferred from homology"/>
<reference key="1">
    <citation type="journal article" date="1989" name="Mol. Microbiol.">
        <title>Primary structure, functional organization and expression of nitrogenase structural genes of the thermophilic archaebacterium Methanococcus thermolithotrophicus.</title>
        <authorList>
            <person name="Souillard N."/>
            <person name="Sibold L."/>
        </authorList>
    </citation>
    <scope>NUCLEOTIDE SEQUENCE [GENOMIC DNA]</scope>
</reference>